<protein>
    <recommendedName>
        <fullName evidence="1">ATP synthase subunit alpha</fullName>
        <ecNumber evidence="1">7.1.2.2</ecNumber>
    </recommendedName>
    <alternativeName>
        <fullName evidence="1">ATP synthase F1 sector subunit alpha</fullName>
    </alternativeName>
    <alternativeName>
        <fullName evidence="1">F-ATPase subunit alpha</fullName>
    </alternativeName>
</protein>
<organism>
    <name type="scientific">Paramagnetospirillum magneticum (strain ATCC 700264 / AMB-1)</name>
    <name type="common">Magnetospirillum magneticum</name>
    <dbReference type="NCBI Taxonomy" id="342108"/>
    <lineage>
        <taxon>Bacteria</taxon>
        <taxon>Pseudomonadati</taxon>
        <taxon>Pseudomonadota</taxon>
        <taxon>Alphaproteobacteria</taxon>
        <taxon>Rhodospirillales</taxon>
        <taxon>Magnetospirillaceae</taxon>
        <taxon>Paramagnetospirillum</taxon>
    </lineage>
</organism>
<dbReference type="EC" id="7.1.2.2" evidence="1"/>
<dbReference type="EMBL" id="AP007255">
    <property type="protein sequence ID" value="BAE52945.1"/>
    <property type="molecule type" value="Genomic_DNA"/>
</dbReference>
<dbReference type="RefSeq" id="WP_011386490.1">
    <property type="nucleotide sequence ID" value="NC_007626.1"/>
</dbReference>
<dbReference type="SMR" id="Q2VZN0"/>
<dbReference type="STRING" id="342108.amb4141"/>
<dbReference type="KEGG" id="mag:amb4141"/>
<dbReference type="HOGENOM" id="CLU_010091_2_1_5"/>
<dbReference type="OrthoDB" id="9803053at2"/>
<dbReference type="Proteomes" id="UP000007058">
    <property type="component" value="Chromosome"/>
</dbReference>
<dbReference type="GO" id="GO:0005886">
    <property type="term" value="C:plasma membrane"/>
    <property type="evidence" value="ECO:0007669"/>
    <property type="project" value="UniProtKB-SubCell"/>
</dbReference>
<dbReference type="GO" id="GO:0045259">
    <property type="term" value="C:proton-transporting ATP synthase complex"/>
    <property type="evidence" value="ECO:0007669"/>
    <property type="project" value="UniProtKB-KW"/>
</dbReference>
<dbReference type="GO" id="GO:0043531">
    <property type="term" value="F:ADP binding"/>
    <property type="evidence" value="ECO:0007669"/>
    <property type="project" value="TreeGrafter"/>
</dbReference>
<dbReference type="GO" id="GO:0005524">
    <property type="term" value="F:ATP binding"/>
    <property type="evidence" value="ECO:0007669"/>
    <property type="project" value="UniProtKB-UniRule"/>
</dbReference>
<dbReference type="GO" id="GO:0046933">
    <property type="term" value="F:proton-transporting ATP synthase activity, rotational mechanism"/>
    <property type="evidence" value="ECO:0007669"/>
    <property type="project" value="UniProtKB-UniRule"/>
</dbReference>
<dbReference type="CDD" id="cd18113">
    <property type="entry name" value="ATP-synt_F1_alpha_C"/>
    <property type="match status" value="1"/>
</dbReference>
<dbReference type="CDD" id="cd18116">
    <property type="entry name" value="ATP-synt_F1_alpha_N"/>
    <property type="match status" value="1"/>
</dbReference>
<dbReference type="CDD" id="cd01132">
    <property type="entry name" value="F1-ATPase_alpha_CD"/>
    <property type="match status" value="1"/>
</dbReference>
<dbReference type="FunFam" id="1.20.150.20:FF:000001">
    <property type="entry name" value="ATP synthase subunit alpha"/>
    <property type="match status" value="1"/>
</dbReference>
<dbReference type="FunFam" id="2.40.30.20:FF:000001">
    <property type="entry name" value="ATP synthase subunit alpha"/>
    <property type="match status" value="1"/>
</dbReference>
<dbReference type="FunFam" id="3.40.50.300:FF:002432">
    <property type="entry name" value="ATP synthase subunit alpha, mitochondrial"/>
    <property type="match status" value="1"/>
</dbReference>
<dbReference type="Gene3D" id="2.40.30.20">
    <property type="match status" value="1"/>
</dbReference>
<dbReference type="Gene3D" id="1.20.150.20">
    <property type="entry name" value="ATP synthase alpha/beta chain, C-terminal domain"/>
    <property type="match status" value="1"/>
</dbReference>
<dbReference type="Gene3D" id="3.40.50.300">
    <property type="entry name" value="P-loop containing nucleotide triphosphate hydrolases"/>
    <property type="match status" value="1"/>
</dbReference>
<dbReference type="HAMAP" id="MF_01346">
    <property type="entry name" value="ATP_synth_alpha_bact"/>
    <property type="match status" value="1"/>
</dbReference>
<dbReference type="InterPro" id="IPR023366">
    <property type="entry name" value="ATP_synth_asu-like_sf"/>
</dbReference>
<dbReference type="InterPro" id="IPR000793">
    <property type="entry name" value="ATP_synth_asu_C"/>
</dbReference>
<dbReference type="InterPro" id="IPR038376">
    <property type="entry name" value="ATP_synth_asu_C_sf"/>
</dbReference>
<dbReference type="InterPro" id="IPR033732">
    <property type="entry name" value="ATP_synth_F1_a_nt-bd_dom"/>
</dbReference>
<dbReference type="InterPro" id="IPR005294">
    <property type="entry name" value="ATP_synth_F1_asu"/>
</dbReference>
<dbReference type="InterPro" id="IPR020003">
    <property type="entry name" value="ATPase_a/bsu_AS"/>
</dbReference>
<dbReference type="InterPro" id="IPR004100">
    <property type="entry name" value="ATPase_F1/V1/A1_a/bsu_N"/>
</dbReference>
<dbReference type="InterPro" id="IPR036121">
    <property type="entry name" value="ATPase_F1/V1/A1_a/bsu_N_sf"/>
</dbReference>
<dbReference type="InterPro" id="IPR000194">
    <property type="entry name" value="ATPase_F1/V1/A1_a/bsu_nucl-bd"/>
</dbReference>
<dbReference type="InterPro" id="IPR027417">
    <property type="entry name" value="P-loop_NTPase"/>
</dbReference>
<dbReference type="NCBIfam" id="TIGR00962">
    <property type="entry name" value="atpA"/>
    <property type="match status" value="1"/>
</dbReference>
<dbReference type="NCBIfam" id="NF009884">
    <property type="entry name" value="PRK13343.1"/>
    <property type="match status" value="1"/>
</dbReference>
<dbReference type="PANTHER" id="PTHR48082">
    <property type="entry name" value="ATP SYNTHASE SUBUNIT ALPHA, MITOCHONDRIAL"/>
    <property type="match status" value="1"/>
</dbReference>
<dbReference type="PANTHER" id="PTHR48082:SF2">
    <property type="entry name" value="ATP SYNTHASE SUBUNIT ALPHA, MITOCHONDRIAL"/>
    <property type="match status" value="1"/>
</dbReference>
<dbReference type="Pfam" id="PF00006">
    <property type="entry name" value="ATP-synt_ab"/>
    <property type="match status" value="1"/>
</dbReference>
<dbReference type="Pfam" id="PF00306">
    <property type="entry name" value="ATP-synt_ab_C"/>
    <property type="match status" value="1"/>
</dbReference>
<dbReference type="Pfam" id="PF02874">
    <property type="entry name" value="ATP-synt_ab_N"/>
    <property type="match status" value="1"/>
</dbReference>
<dbReference type="PIRSF" id="PIRSF039088">
    <property type="entry name" value="F_ATPase_subunit_alpha"/>
    <property type="match status" value="1"/>
</dbReference>
<dbReference type="SUPFAM" id="SSF47917">
    <property type="entry name" value="C-terminal domain of alpha and beta subunits of F1 ATP synthase"/>
    <property type="match status" value="1"/>
</dbReference>
<dbReference type="SUPFAM" id="SSF50615">
    <property type="entry name" value="N-terminal domain of alpha and beta subunits of F1 ATP synthase"/>
    <property type="match status" value="1"/>
</dbReference>
<dbReference type="SUPFAM" id="SSF52540">
    <property type="entry name" value="P-loop containing nucleoside triphosphate hydrolases"/>
    <property type="match status" value="1"/>
</dbReference>
<dbReference type="PROSITE" id="PS00152">
    <property type="entry name" value="ATPASE_ALPHA_BETA"/>
    <property type="match status" value="1"/>
</dbReference>
<comment type="function">
    <text evidence="1">Produces ATP from ADP in the presence of a proton gradient across the membrane. The alpha chain is a regulatory subunit.</text>
</comment>
<comment type="catalytic activity">
    <reaction evidence="1">
        <text>ATP + H2O + 4 H(+)(in) = ADP + phosphate + 5 H(+)(out)</text>
        <dbReference type="Rhea" id="RHEA:57720"/>
        <dbReference type="ChEBI" id="CHEBI:15377"/>
        <dbReference type="ChEBI" id="CHEBI:15378"/>
        <dbReference type="ChEBI" id="CHEBI:30616"/>
        <dbReference type="ChEBI" id="CHEBI:43474"/>
        <dbReference type="ChEBI" id="CHEBI:456216"/>
        <dbReference type="EC" id="7.1.2.2"/>
    </reaction>
</comment>
<comment type="subunit">
    <text evidence="1">F-type ATPases have 2 components, CF(1) - the catalytic core - and CF(0) - the membrane proton channel. CF(1) has five subunits: alpha(3), beta(3), gamma(1), delta(1), epsilon(1). CF(0) has three main subunits: a(1), b(2) and c(9-12). The alpha and beta chains form an alternating ring which encloses part of the gamma chain. CF(1) is attached to CF(0) by a central stalk formed by the gamma and epsilon chains, while a peripheral stalk is formed by the delta and b chains.</text>
</comment>
<comment type="subcellular location">
    <subcellularLocation>
        <location evidence="1">Cell inner membrane</location>
        <topology evidence="1">Peripheral membrane protein</topology>
    </subcellularLocation>
</comment>
<comment type="similarity">
    <text evidence="1">Belongs to the ATPase alpha/beta chains family.</text>
</comment>
<reference key="1">
    <citation type="journal article" date="2005" name="DNA Res.">
        <title>Complete genome sequence of the facultative anaerobic magnetotactic bacterium Magnetospirillum sp. strain AMB-1.</title>
        <authorList>
            <person name="Matsunaga T."/>
            <person name="Okamura Y."/>
            <person name="Fukuda Y."/>
            <person name="Wahyudi A.T."/>
            <person name="Murase Y."/>
            <person name="Takeyama H."/>
        </authorList>
    </citation>
    <scope>NUCLEOTIDE SEQUENCE [LARGE SCALE GENOMIC DNA]</scope>
    <source>
        <strain>ATCC 700264 / AMB-1</strain>
    </source>
</reference>
<feature type="chain" id="PRO_0000238283" description="ATP synthase subunit alpha">
    <location>
        <begin position="1"/>
        <end position="509"/>
    </location>
</feature>
<feature type="binding site" evidence="1">
    <location>
        <begin position="169"/>
        <end position="176"/>
    </location>
    <ligand>
        <name>ATP</name>
        <dbReference type="ChEBI" id="CHEBI:30616"/>
    </ligand>
</feature>
<feature type="site" description="Required for activity" evidence="1">
    <location>
        <position position="370"/>
    </location>
</feature>
<proteinExistence type="inferred from homology"/>
<keyword id="KW-0066">ATP synthesis</keyword>
<keyword id="KW-0067">ATP-binding</keyword>
<keyword id="KW-0997">Cell inner membrane</keyword>
<keyword id="KW-1003">Cell membrane</keyword>
<keyword id="KW-0139">CF(1)</keyword>
<keyword id="KW-0375">Hydrogen ion transport</keyword>
<keyword id="KW-0406">Ion transport</keyword>
<keyword id="KW-0472">Membrane</keyword>
<keyword id="KW-0547">Nucleotide-binding</keyword>
<keyword id="KW-1278">Translocase</keyword>
<keyword id="KW-0813">Transport</keyword>
<sequence>MEIRAAEISAILKQQIATFGTEAEVAEVGQVLSVGDGIARVHGLDKVQAGEMVEFPGGIKGMALNLETDNVGVVIFGDDRNIKEGDVVKRTGSIVDVPVGKGLLGRVVDALGNPIDGKGPIEAASRQRVDVKAPGIIPRKSVHEPMSTGIKAVDALIPIGRGQRELVIGDRQTGKTAILVDTIINQKRWHDANDEKAKLFCIYVAVGQKRSTVAQIVKTLTDYGAMDYTIVVAATASEPAPLQFIAPYAGCTMGEYFRDNGMHALIIYDDLSKQAVAYRQMSLLLRRPPGREAYPGDVFYLHSRLLERAAKMGDAAGAGSLTALPVIETQANDVSAYIPTNVISITDGQIFLETELFYKGIRPAVNVGLSVSRVGSAAQIKAMKQVAGSIKLELAQYREMAAFAQFASDLDPATQKLLARGARLTELLKQPQFSPMATEEEVISIYAGVKGYLDKIDVRQVGRFESSLLSEIKSKAPEILTAIATEKQISAQTEEKLKAFLDAFSKTFA</sequence>
<evidence type="ECO:0000255" key="1">
    <source>
        <dbReference type="HAMAP-Rule" id="MF_01346"/>
    </source>
</evidence>
<gene>
    <name evidence="1" type="primary">atpA</name>
    <name type="ordered locus">amb4141</name>
</gene>
<name>ATPA_PARM1</name>
<accession>Q2VZN0</accession>